<keyword id="KW-0479">Metal-binding</keyword>
<keyword id="KW-0687">Ribonucleoprotein</keyword>
<keyword id="KW-0689">Ribosomal protein</keyword>
<keyword id="KW-0694">RNA-binding</keyword>
<keyword id="KW-0699">rRNA-binding</keyword>
<keyword id="KW-0862">Zinc</keyword>
<keyword id="KW-0863">Zinc-finger</keyword>
<proteinExistence type="inferred from homology"/>
<reference key="1">
    <citation type="journal article" date="2002" name="J. Mol. Microbiol. Biotechnol.">
        <title>The genome of Methanosarcina mazei: evidence for lateral gene transfer between Bacteria and Archaea.</title>
        <authorList>
            <person name="Deppenmeier U."/>
            <person name="Johann A."/>
            <person name="Hartsch T."/>
            <person name="Merkl R."/>
            <person name="Schmitz R.A."/>
            <person name="Martinez-Arias R."/>
            <person name="Henne A."/>
            <person name="Wiezer A."/>
            <person name="Baeumer S."/>
            <person name="Jacobi C."/>
            <person name="Brueggemann H."/>
            <person name="Lienard T."/>
            <person name="Christmann A."/>
            <person name="Boemecke M."/>
            <person name="Steckel S."/>
            <person name="Bhattacharyya A."/>
            <person name="Lykidis A."/>
            <person name="Overbeek R."/>
            <person name="Klenk H.-P."/>
            <person name="Gunsalus R.P."/>
            <person name="Fritz H.-J."/>
            <person name="Gottschalk G."/>
        </authorList>
    </citation>
    <scope>NUCLEOTIDE SEQUENCE [LARGE SCALE GENOMIC DNA]</scope>
    <source>
        <strain>ATCC BAA-159 / DSM 3647 / Goe1 / Go1 / JCM 11833 / OCM 88</strain>
    </source>
</reference>
<feature type="chain" id="PRO_0000136918" description="Large ribosomal subunit protein eL24">
    <location>
        <begin position="1"/>
        <end position="62"/>
    </location>
</feature>
<feature type="zinc finger region" description="C4-type" evidence="1">
    <location>
        <begin position="6"/>
        <end position="36"/>
    </location>
</feature>
<feature type="binding site" evidence="1">
    <location>
        <position position="6"/>
    </location>
    <ligand>
        <name>Zn(2+)</name>
        <dbReference type="ChEBI" id="CHEBI:29105"/>
    </ligand>
</feature>
<feature type="binding site" evidence="1">
    <location>
        <position position="9"/>
    </location>
    <ligand>
        <name>Zn(2+)</name>
        <dbReference type="ChEBI" id="CHEBI:29105"/>
    </ligand>
</feature>
<feature type="binding site" evidence="1">
    <location>
        <position position="32"/>
    </location>
    <ligand>
        <name>Zn(2+)</name>
        <dbReference type="ChEBI" id="CHEBI:29105"/>
    </ligand>
</feature>
<feature type="binding site" evidence="1">
    <location>
        <position position="36"/>
    </location>
    <ligand>
        <name>Zn(2+)</name>
        <dbReference type="ChEBI" id="CHEBI:29105"/>
    </ligand>
</feature>
<accession>Q8PU76</accession>
<evidence type="ECO:0000255" key="1">
    <source>
        <dbReference type="HAMAP-Rule" id="MF_00773"/>
    </source>
</evidence>
<evidence type="ECO:0000305" key="2"/>
<comment type="function">
    <text evidence="1">Binds to the 23S rRNA.</text>
</comment>
<comment type="cofactor">
    <cofactor evidence="1">
        <name>Zn(2+)</name>
        <dbReference type="ChEBI" id="CHEBI:29105"/>
    </cofactor>
    <text evidence="1">Binds 1 zinc ion per subunit.</text>
</comment>
<comment type="subunit">
    <text evidence="1">Part of the 50S ribosomal subunit. Forms a cluster with proteins L3 and L14.</text>
</comment>
<comment type="similarity">
    <text evidence="1">Belongs to the eukaryotic ribosomal protein eL24 family.</text>
</comment>
<dbReference type="EMBL" id="AE008384">
    <property type="protein sequence ID" value="AAM32161.1"/>
    <property type="molecule type" value="Genomic_DNA"/>
</dbReference>
<dbReference type="RefSeq" id="WP_011034383.1">
    <property type="nucleotide sequence ID" value="NC_003901.1"/>
</dbReference>
<dbReference type="SMR" id="Q8PU76"/>
<dbReference type="KEGG" id="mma:MM_2465"/>
<dbReference type="PATRIC" id="fig|192952.21.peg.2820"/>
<dbReference type="eggNOG" id="arCOG01950">
    <property type="taxonomic scope" value="Archaea"/>
</dbReference>
<dbReference type="HOGENOM" id="CLU_190191_0_0_2"/>
<dbReference type="Proteomes" id="UP000000595">
    <property type="component" value="Chromosome"/>
</dbReference>
<dbReference type="GO" id="GO:1990904">
    <property type="term" value="C:ribonucleoprotein complex"/>
    <property type="evidence" value="ECO:0007669"/>
    <property type="project" value="UniProtKB-KW"/>
</dbReference>
<dbReference type="GO" id="GO:0005840">
    <property type="term" value="C:ribosome"/>
    <property type="evidence" value="ECO:0007669"/>
    <property type="project" value="UniProtKB-KW"/>
</dbReference>
<dbReference type="GO" id="GO:0019843">
    <property type="term" value="F:rRNA binding"/>
    <property type="evidence" value="ECO:0007669"/>
    <property type="project" value="UniProtKB-UniRule"/>
</dbReference>
<dbReference type="GO" id="GO:0003735">
    <property type="term" value="F:structural constituent of ribosome"/>
    <property type="evidence" value="ECO:0007669"/>
    <property type="project" value="InterPro"/>
</dbReference>
<dbReference type="GO" id="GO:0008270">
    <property type="term" value="F:zinc ion binding"/>
    <property type="evidence" value="ECO:0007669"/>
    <property type="project" value="UniProtKB-UniRule"/>
</dbReference>
<dbReference type="GO" id="GO:0006412">
    <property type="term" value="P:translation"/>
    <property type="evidence" value="ECO:0007669"/>
    <property type="project" value="UniProtKB-UniRule"/>
</dbReference>
<dbReference type="CDD" id="cd00472">
    <property type="entry name" value="Ribosomal_L24e_L24"/>
    <property type="match status" value="1"/>
</dbReference>
<dbReference type="FunFam" id="2.30.170.20:FF:000006">
    <property type="entry name" value="50S ribosomal protein L24e"/>
    <property type="match status" value="1"/>
</dbReference>
<dbReference type="Gene3D" id="2.30.170.20">
    <property type="entry name" value="Ribosomal protein L24e"/>
    <property type="match status" value="1"/>
</dbReference>
<dbReference type="HAMAP" id="MF_00773">
    <property type="entry name" value="Ribosomal_eL24"/>
    <property type="match status" value="1"/>
</dbReference>
<dbReference type="InterPro" id="IPR038630">
    <property type="entry name" value="L24e/L24_sf"/>
</dbReference>
<dbReference type="InterPro" id="IPR055345">
    <property type="entry name" value="Ribosomal_eL24-rel_arc"/>
</dbReference>
<dbReference type="InterPro" id="IPR000988">
    <property type="entry name" value="Ribosomal_eL24-rel_N"/>
</dbReference>
<dbReference type="InterPro" id="IPR023442">
    <property type="entry name" value="Ribosomal_eL24_CS"/>
</dbReference>
<dbReference type="InterPro" id="IPR011017">
    <property type="entry name" value="TRASH_dom"/>
</dbReference>
<dbReference type="NCBIfam" id="NF034186">
    <property type="entry name" value="PRK14891.1-1"/>
    <property type="match status" value="1"/>
</dbReference>
<dbReference type="Pfam" id="PF01246">
    <property type="entry name" value="Ribosomal_L24e"/>
    <property type="match status" value="1"/>
</dbReference>
<dbReference type="SMART" id="SM00746">
    <property type="entry name" value="TRASH"/>
    <property type="match status" value="1"/>
</dbReference>
<dbReference type="SUPFAM" id="SSF57716">
    <property type="entry name" value="Glucocorticoid receptor-like (DNA-binding domain)"/>
    <property type="match status" value="1"/>
</dbReference>
<dbReference type="PROSITE" id="PS01073">
    <property type="entry name" value="RIBOSOMAL_L24E"/>
    <property type="match status" value="1"/>
</dbReference>
<organism>
    <name type="scientific">Methanosarcina mazei (strain ATCC BAA-159 / DSM 3647 / Goe1 / Go1 / JCM 11833 / OCM 88)</name>
    <name type="common">Methanosarcina frisia</name>
    <dbReference type="NCBI Taxonomy" id="192952"/>
    <lineage>
        <taxon>Archaea</taxon>
        <taxon>Methanobacteriati</taxon>
        <taxon>Methanobacteriota</taxon>
        <taxon>Stenosarchaea group</taxon>
        <taxon>Methanomicrobia</taxon>
        <taxon>Methanosarcinales</taxon>
        <taxon>Methanosarcinaceae</taxon>
        <taxon>Methanosarcina</taxon>
    </lineage>
</organism>
<gene>
    <name evidence="1" type="primary">rpl24e</name>
    <name type="ordered locus">MM_2465</name>
</gene>
<name>RL24E_METMA</name>
<protein>
    <recommendedName>
        <fullName evidence="1">Large ribosomal subunit protein eL24</fullName>
    </recommendedName>
    <alternativeName>
        <fullName evidence="2">50S ribosomal protein L24e</fullName>
    </alternativeName>
</protein>
<sequence length="62" mass="7205">MEQRKCYFCGQMLEPGTGKLYIKKDGSTYFMCSSKCMSNFALGRLPRRTEWTEKGKIQLKKA</sequence>